<proteinExistence type="evidence at protein level"/>
<name>DPHB_AERPE</name>
<feature type="chain" id="PRO_0000156114" description="Diphthine synthase">
    <location>
        <begin position="1"/>
        <end position="294"/>
    </location>
</feature>
<feature type="binding site" evidence="1">
    <location>
        <position position="93"/>
    </location>
    <ligand>
        <name>S-adenosyl-L-methionine</name>
        <dbReference type="ChEBI" id="CHEBI:59789"/>
    </ligand>
</feature>
<feature type="binding site" evidence="1">
    <location>
        <position position="96"/>
    </location>
    <ligand>
        <name>S-adenosyl-L-methionine</name>
        <dbReference type="ChEBI" id="CHEBI:59789"/>
    </ligand>
</feature>
<feature type="binding site" evidence="1">
    <location>
        <begin position="121"/>
        <end position="122"/>
    </location>
    <ligand>
        <name>S-adenosyl-L-methionine</name>
        <dbReference type="ChEBI" id="CHEBI:59789"/>
    </ligand>
</feature>
<feature type="binding site" evidence="1">
    <location>
        <position position="173"/>
    </location>
    <ligand>
        <name>S-adenosyl-L-methionine</name>
        <dbReference type="ChEBI" id="CHEBI:59789"/>
    </ligand>
</feature>
<feature type="binding site" evidence="1">
    <location>
        <position position="220"/>
    </location>
    <ligand>
        <name>S-adenosyl-L-methionine</name>
        <dbReference type="ChEBI" id="CHEBI:59789"/>
    </ligand>
</feature>
<feature type="strand" evidence="3">
    <location>
        <begin position="9"/>
        <end position="14"/>
    </location>
</feature>
<feature type="strand" evidence="3">
    <location>
        <begin position="16"/>
        <end position="18"/>
    </location>
</feature>
<feature type="helix" evidence="3">
    <location>
        <begin position="24"/>
        <end position="32"/>
    </location>
</feature>
<feature type="strand" evidence="3">
    <location>
        <begin position="34"/>
        <end position="39"/>
    </location>
</feature>
<feature type="strand" evidence="3">
    <location>
        <begin position="41"/>
        <end position="43"/>
    </location>
</feature>
<feature type="helix" evidence="3">
    <location>
        <begin position="48"/>
        <end position="57"/>
    </location>
</feature>
<feature type="strand" evidence="3">
    <location>
        <begin position="59"/>
        <end position="64"/>
    </location>
</feature>
<feature type="helix" evidence="3">
    <location>
        <begin position="67"/>
        <end position="71"/>
    </location>
</feature>
<feature type="helix" evidence="3">
    <location>
        <begin position="74"/>
        <end position="77"/>
    </location>
</feature>
<feature type="strand" evidence="3">
    <location>
        <begin position="85"/>
        <end position="92"/>
    </location>
</feature>
<feature type="strand" evidence="3">
    <location>
        <begin position="96"/>
        <end position="99"/>
    </location>
</feature>
<feature type="helix" evidence="3">
    <location>
        <begin position="100"/>
        <end position="109"/>
    </location>
</feature>
<feature type="strand" evidence="3">
    <location>
        <begin position="113"/>
        <end position="117"/>
    </location>
</feature>
<feature type="helix" evidence="3">
    <location>
        <begin position="122"/>
        <end position="130"/>
    </location>
</feature>
<feature type="helix" evidence="3">
    <location>
        <begin position="134"/>
        <end position="136"/>
    </location>
</feature>
<feature type="strand" evidence="3">
    <location>
        <begin position="137"/>
        <end position="143"/>
    </location>
</feature>
<feature type="helix" evidence="3">
    <location>
        <begin position="146"/>
        <end position="148"/>
    </location>
</feature>
<feature type="helix" evidence="3">
    <location>
        <begin position="153"/>
        <end position="164"/>
    </location>
</feature>
<feature type="strand" evidence="3">
    <location>
        <begin position="168"/>
        <end position="173"/>
    </location>
</feature>
<feature type="helix" evidence="3">
    <location>
        <begin position="184"/>
        <end position="202"/>
    </location>
</feature>
<feature type="helix" evidence="3">
    <location>
        <begin position="208"/>
        <end position="210"/>
    </location>
</feature>
<feature type="strand" evidence="3">
    <location>
        <begin position="213"/>
        <end position="217"/>
    </location>
</feature>
<feature type="helix" evidence="3">
    <location>
        <begin position="220"/>
        <end position="222"/>
    </location>
</feature>
<feature type="strand" evidence="3">
    <location>
        <begin position="225"/>
        <end position="230"/>
    </location>
</feature>
<feature type="helix" evidence="3">
    <location>
        <begin position="232"/>
        <end position="236"/>
    </location>
</feature>
<feature type="strand" evidence="3">
    <location>
        <begin position="246"/>
        <end position="249"/>
    </location>
</feature>
<feature type="helix" evidence="3">
    <location>
        <begin position="255"/>
        <end position="264"/>
    </location>
</feature>
<feature type="helix" evidence="3">
    <location>
        <begin position="277"/>
        <end position="287"/>
    </location>
</feature>
<feature type="turn" evidence="3">
    <location>
        <begin position="288"/>
        <end position="290"/>
    </location>
</feature>
<dbReference type="EC" id="2.1.1.98"/>
<dbReference type="EMBL" id="BA000002">
    <property type="protein sequence ID" value="BAA79915.1"/>
    <property type="molecule type" value="Genomic_DNA"/>
</dbReference>
<dbReference type="PIR" id="C72689">
    <property type="entry name" value="C72689"/>
</dbReference>
<dbReference type="RefSeq" id="WP_010866074.1">
    <property type="nucleotide sequence ID" value="NC_000854.2"/>
</dbReference>
<dbReference type="PDB" id="1WDE">
    <property type="method" value="X-ray"/>
    <property type="resolution" value="2.00 A"/>
    <property type="chains" value="A=1-294"/>
</dbReference>
<dbReference type="PDBsum" id="1WDE"/>
<dbReference type="SMR" id="Q9YDI2"/>
<dbReference type="STRING" id="272557.APE_0931"/>
<dbReference type="EnsemblBacteria" id="BAA79915">
    <property type="protein sequence ID" value="BAA79915"/>
    <property type="gene ID" value="APE_0931"/>
</dbReference>
<dbReference type="GeneID" id="1445012"/>
<dbReference type="KEGG" id="ape:APE_0931"/>
<dbReference type="PATRIC" id="fig|272557.25.peg.669"/>
<dbReference type="eggNOG" id="arCOG04161">
    <property type="taxonomic scope" value="Archaea"/>
</dbReference>
<dbReference type="BRENDA" id="2.1.1.98">
    <property type="organism ID" value="171"/>
</dbReference>
<dbReference type="UniPathway" id="UPA00559"/>
<dbReference type="EvolutionaryTrace" id="Q9YDI2"/>
<dbReference type="Proteomes" id="UP000002518">
    <property type="component" value="Chromosome"/>
</dbReference>
<dbReference type="GO" id="GO:0004164">
    <property type="term" value="F:diphthine synthase activity"/>
    <property type="evidence" value="ECO:0007669"/>
    <property type="project" value="UniProtKB-UniRule"/>
</dbReference>
<dbReference type="GO" id="GO:0032259">
    <property type="term" value="P:methylation"/>
    <property type="evidence" value="ECO:0007669"/>
    <property type="project" value="UniProtKB-KW"/>
</dbReference>
<dbReference type="GO" id="GO:0017183">
    <property type="term" value="P:protein histidyl modification to diphthamide"/>
    <property type="evidence" value="ECO:0007669"/>
    <property type="project" value="UniProtKB-UniRule"/>
</dbReference>
<dbReference type="CDD" id="cd11647">
    <property type="entry name" value="DHP5_DphB"/>
    <property type="match status" value="1"/>
</dbReference>
<dbReference type="Gene3D" id="3.40.1010.10">
    <property type="entry name" value="Cobalt-precorrin-4 Transmethylase, Domain 1"/>
    <property type="match status" value="1"/>
</dbReference>
<dbReference type="Gene3D" id="3.30.950.10">
    <property type="entry name" value="Methyltransferase, Cobalt-precorrin-4 Transmethylase, Domain 2"/>
    <property type="match status" value="1"/>
</dbReference>
<dbReference type="HAMAP" id="MF_01084">
    <property type="entry name" value="Diphthine_synth"/>
    <property type="match status" value="1"/>
</dbReference>
<dbReference type="InterPro" id="IPR000878">
    <property type="entry name" value="4pyrrol_Mease"/>
</dbReference>
<dbReference type="InterPro" id="IPR035996">
    <property type="entry name" value="4pyrrol_Methylase_sf"/>
</dbReference>
<dbReference type="InterPro" id="IPR014777">
    <property type="entry name" value="4pyrrole_Mease_sub1"/>
</dbReference>
<dbReference type="InterPro" id="IPR014776">
    <property type="entry name" value="4pyrrole_Mease_sub2"/>
</dbReference>
<dbReference type="InterPro" id="IPR004551">
    <property type="entry name" value="Dphthn_synthase"/>
</dbReference>
<dbReference type="NCBIfam" id="TIGR00522">
    <property type="entry name" value="dph5"/>
    <property type="match status" value="1"/>
</dbReference>
<dbReference type="PANTHER" id="PTHR10882:SF0">
    <property type="entry name" value="DIPHTHINE METHYL ESTER SYNTHASE"/>
    <property type="match status" value="1"/>
</dbReference>
<dbReference type="PANTHER" id="PTHR10882">
    <property type="entry name" value="DIPHTHINE SYNTHASE"/>
    <property type="match status" value="1"/>
</dbReference>
<dbReference type="Pfam" id="PF00590">
    <property type="entry name" value="TP_methylase"/>
    <property type="match status" value="1"/>
</dbReference>
<dbReference type="PIRSF" id="PIRSF036432">
    <property type="entry name" value="Diphthine_synth"/>
    <property type="match status" value="1"/>
</dbReference>
<dbReference type="SUPFAM" id="SSF53790">
    <property type="entry name" value="Tetrapyrrole methylase"/>
    <property type="match status" value="1"/>
</dbReference>
<reference key="1">
    <citation type="journal article" date="1999" name="DNA Res.">
        <title>Complete genome sequence of an aerobic hyper-thermophilic crenarchaeon, Aeropyrum pernix K1.</title>
        <authorList>
            <person name="Kawarabayasi Y."/>
            <person name="Hino Y."/>
            <person name="Horikawa H."/>
            <person name="Yamazaki S."/>
            <person name="Haikawa Y."/>
            <person name="Jin-no K."/>
            <person name="Takahashi M."/>
            <person name="Sekine M."/>
            <person name="Baba S."/>
            <person name="Ankai A."/>
            <person name="Kosugi H."/>
            <person name="Hosoyama A."/>
            <person name="Fukui S."/>
            <person name="Nagai Y."/>
            <person name="Nishijima K."/>
            <person name="Nakazawa H."/>
            <person name="Takamiya M."/>
            <person name="Masuda S."/>
            <person name="Funahashi T."/>
            <person name="Tanaka T."/>
            <person name="Kudoh Y."/>
            <person name="Yamazaki J."/>
            <person name="Kushida N."/>
            <person name="Oguchi A."/>
            <person name="Aoki K."/>
            <person name="Kubota K."/>
            <person name="Nakamura Y."/>
            <person name="Nomura N."/>
            <person name="Sako Y."/>
            <person name="Kikuchi H."/>
        </authorList>
    </citation>
    <scope>NUCLEOTIDE SEQUENCE [LARGE SCALE GENOMIC DNA]</scope>
    <source>
        <strain>ATCC 700893 / DSM 11879 / JCM 9820 / NBRC 100138 / K1</strain>
    </source>
</reference>
<reference key="2">
    <citation type="journal article" date="2008" name="Acta Crystallogr. D">
        <title>Structures of two archaeal diphthine synthases: insights into the post-translational modification of elongation factor 2.</title>
        <authorList>
            <person name="Kishishita S."/>
            <person name="Shimizu K."/>
            <person name="Murayama K."/>
            <person name="Terada T."/>
            <person name="Shirouzu M."/>
            <person name="Yokoyama S."/>
            <person name="Kunishima N."/>
        </authorList>
    </citation>
    <scope>X-RAY CRYSTALLOGRAPHY (2.0 ANGSTROMS)</scope>
    <source>
        <strain>ATCC 700893 / DSM 11879 / JCM 9820 / NBRC 100138 / K1</strain>
    </source>
</reference>
<evidence type="ECO:0000250" key="1"/>
<evidence type="ECO:0000305" key="2"/>
<evidence type="ECO:0007829" key="3">
    <source>
        <dbReference type="PDB" id="1WDE"/>
    </source>
</evidence>
<keyword id="KW-0002">3D-structure</keyword>
<keyword id="KW-0489">Methyltransferase</keyword>
<keyword id="KW-1185">Reference proteome</keyword>
<keyword id="KW-0949">S-adenosyl-L-methionine</keyword>
<keyword id="KW-0808">Transferase</keyword>
<comment type="function">
    <text evidence="1">S-adenosyl-L-methionine-dependent methyltransferase that catalyzes the trimethylation of the amino group of the modified target histidine residue in translation elongation factor 2 (EF-2), to form an intermediate called diphthine. The three successive methylation reactions represent the second step of diphthamide biosynthesis (By similarity).</text>
</comment>
<comment type="catalytic activity">
    <reaction>
        <text>2-[(3S)-amino-3-carboxypropyl]-L-histidyl-[translation elongation factor 2] + 3 S-adenosyl-L-methionine = diphthine-[translation elongation factor 2] + 3 S-adenosyl-L-homocysteine + 3 H(+)</text>
        <dbReference type="Rhea" id="RHEA:36415"/>
        <dbReference type="Rhea" id="RHEA-COMP:9749"/>
        <dbReference type="Rhea" id="RHEA-COMP:10172"/>
        <dbReference type="ChEBI" id="CHEBI:15378"/>
        <dbReference type="ChEBI" id="CHEBI:57856"/>
        <dbReference type="ChEBI" id="CHEBI:59789"/>
        <dbReference type="ChEBI" id="CHEBI:73995"/>
        <dbReference type="ChEBI" id="CHEBI:82696"/>
        <dbReference type="EC" id="2.1.1.98"/>
    </reaction>
</comment>
<comment type="pathway">
    <text>Protein modification; peptidyl-diphthamide biosynthesis.</text>
</comment>
<comment type="subunit">
    <text evidence="1">Homodimer.</text>
</comment>
<comment type="similarity">
    <text evidence="2">Belongs to the diphthine synthase family.</text>
</comment>
<protein>
    <recommendedName>
        <fullName>Diphthine synthase</fullName>
        <ecNumber>2.1.1.98</ecNumber>
    </recommendedName>
    <alternativeName>
        <fullName>Diphthamide biosynthesis methyltransferase</fullName>
    </alternativeName>
</protein>
<organism>
    <name type="scientific">Aeropyrum pernix (strain ATCC 700893 / DSM 11879 / JCM 9820 / NBRC 100138 / K1)</name>
    <dbReference type="NCBI Taxonomy" id="272557"/>
    <lineage>
        <taxon>Archaea</taxon>
        <taxon>Thermoproteota</taxon>
        <taxon>Thermoprotei</taxon>
        <taxon>Desulfurococcales</taxon>
        <taxon>Desulfurococcaceae</taxon>
        <taxon>Aeropyrum</taxon>
    </lineage>
</organism>
<gene>
    <name type="primary">dphB</name>
    <name type="ordered locus">APE_0931</name>
</gene>
<sequence length="294" mass="31451">MARGREAVTLLLVGWGYAPGMQTLEALDAVRRADVVYVESYTMPGSSWLYKSVVEAAGEARVVEASRRDLEERSREIVSRALDAVVAVVTAGDPMVATTHSSLAAEALEAGVAVRYIPGVSGVQAARGATMLSFYRFGGTVTLPGPWRGVTPISVARRIYLNLCAGLHTTALLDVDERGVQLSPGQGVSLLLEADREYAREAGAPALLARLPSVLVEAGAGGGHRVLYWSSLERLSTADVEGGVYSIVIPARLSGVEEWLLAAASGQRRPLEYDRSVYETVEENCKKGVYMEPV</sequence>
<accession>Q9YDI2</accession>